<organism>
    <name type="scientific">Buchnera aphidicola subsp. Acyrthosiphon pisum (strain 5A)</name>
    <dbReference type="NCBI Taxonomy" id="563178"/>
    <lineage>
        <taxon>Bacteria</taxon>
        <taxon>Pseudomonadati</taxon>
        <taxon>Pseudomonadota</taxon>
        <taxon>Gammaproteobacteria</taxon>
        <taxon>Enterobacterales</taxon>
        <taxon>Erwiniaceae</taxon>
        <taxon>Buchnera</taxon>
    </lineage>
</organism>
<comment type="function">
    <text evidence="1">Catalyzes the reversible phosphatidyl group transfer from one phosphatidylglycerol molecule to another to form cardiolipin (CL) (diphosphatidylglycerol) and glycerol.</text>
</comment>
<comment type="catalytic activity">
    <reaction evidence="1">
        <text>2 a 1,2-diacyl-sn-glycero-3-phospho-(1'-sn-glycerol) = a cardiolipin + glycerol</text>
        <dbReference type="Rhea" id="RHEA:31451"/>
        <dbReference type="ChEBI" id="CHEBI:17754"/>
        <dbReference type="ChEBI" id="CHEBI:62237"/>
        <dbReference type="ChEBI" id="CHEBI:64716"/>
    </reaction>
</comment>
<comment type="subcellular location">
    <subcellularLocation>
        <location evidence="1">Cell inner membrane</location>
        <topology evidence="1">Multi-pass membrane protein</topology>
    </subcellularLocation>
</comment>
<comment type="similarity">
    <text evidence="1">Belongs to the phospholipase D family. Cardiolipin synthase subfamily. ClsA sub-subfamily.</text>
</comment>
<gene>
    <name evidence="1" type="primary">clsA</name>
    <name type="synonym">cls</name>
    <name type="ordered locus">BUAP5A_268</name>
</gene>
<keyword id="KW-0997">Cell inner membrane</keyword>
<keyword id="KW-1003">Cell membrane</keyword>
<keyword id="KW-0444">Lipid biosynthesis</keyword>
<keyword id="KW-0443">Lipid metabolism</keyword>
<keyword id="KW-0472">Membrane</keyword>
<keyword id="KW-0594">Phospholipid biosynthesis</keyword>
<keyword id="KW-1208">Phospholipid metabolism</keyword>
<keyword id="KW-0677">Repeat</keyword>
<keyword id="KW-0808">Transferase</keyword>
<keyword id="KW-0812">Transmembrane</keyword>
<keyword id="KW-1133">Transmembrane helix</keyword>
<reference key="1">
    <citation type="journal article" date="2009" name="Science">
        <title>The dynamics and time scale of ongoing genomic erosion in symbiotic bacteria.</title>
        <authorList>
            <person name="Moran N.A."/>
            <person name="McLaughlin H.J."/>
            <person name="Sorek R."/>
        </authorList>
    </citation>
    <scope>NUCLEOTIDE SEQUENCE [LARGE SCALE GENOMIC DNA]</scope>
    <source>
        <strain>5A</strain>
    </source>
</reference>
<evidence type="ECO:0000255" key="1">
    <source>
        <dbReference type="HAMAP-Rule" id="MF_00190"/>
    </source>
</evidence>
<dbReference type="EC" id="2.7.8.-" evidence="1"/>
<dbReference type="EMBL" id="CP001161">
    <property type="protein sequence ID" value="ACL30637.1"/>
    <property type="molecule type" value="Genomic_DNA"/>
</dbReference>
<dbReference type="RefSeq" id="WP_009874227.1">
    <property type="nucleotide sequence ID" value="NC_011833.1"/>
</dbReference>
<dbReference type="SMR" id="B8D966"/>
<dbReference type="KEGG" id="bap:BUAP5A_268"/>
<dbReference type="HOGENOM" id="CLU_038053_1_0_6"/>
<dbReference type="OrthoDB" id="9814092at2"/>
<dbReference type="Proteomes" id="UP000006904">
    <property type="component" value="Chromosome"/>
</dbReference>
<dbReference type="GO" id="GO:0005886">
    <property type="term" value="C:plasma membrane"/>
    <property type="evidence" value="ECO:0007669"/>
    <property type="project" value="UniProtKB-SubCell"/>
</dbReference>
<dbReference type="GO" id="GO:0008808">
    <property type="term" value="F:cardiolipin synthase activity"/>
    <property type="evidence" value="ECO:0007669"/>
    <property type="project" value="InterPro"/>
</dbReference>
<dbReference type="GO" id="GO:0032049">
    <property type="term" value="P:cardiolipin biosynthetic process"/>
    <property type="evidence" value="ECO:0007669"/>
    <property type="project" value="InterPro"/>
</dbReference>
<dbReference type="CDD" id="cd09152">
    <property type="entry name" value="PLDc_EcCLS_like_1"/>
    <property type="match status" value="1"/>
</dbReference>
<dbReference type="CDD" id="cd09158">
    <property type="entry name" value="PLDc_EcCLS_like_2"/>
    <property type="match status" value="1"/>
</dbReference>
<dbReference type="Gene3D" id="3.30.870.10">
    <property type="entry name" value="Endonuclease Chain A"/>
    <property type="match status" value="2"/>
</dbReference>
<dbReference type="HAMAP" id="MF_00190">
    <property type="entry name" value="Cardiolipin_synth_ClsA"/>
    <property type="match status" value="1"/>
</dbReference>
<dbReference type="InterPro" id="IPR022924">
    <property type="entry name" value="Cardiolipin_synthase"/>
</dbReference>
<dbReference type="InterPro" id="IPR030840">
    <property type="entry name" value="CL_synthase_A"/>
</dbReference>
<dbReference type="InterPro" id="IPR027379">
    <property type="entry name" value="CLS_N"/>
</dbReference>
<dbReference type="InterPro" id="IPR025202">
    <property type="entry name" value="PLD-like_dom"/>
</dbReference>
<dbReference type="InterPro" id="IPR001736">
    <property type="entry name" value="PLipase_D/transphosphatidylase"/>
</dbReference>
<dbReference type="NCBIfam" id="TIGR04265">
    <property type="entry name" value="bac_cardiolipin"/>
    <property type="match status" value="1"/>
</dbReference>
<dbReference type="PANTHER" id="PTHR21248">
    <property type="entry name" value="CARDIOLIPIN SYNTHASE"/>
    <property type="match status" value="1"/>
</dbReference>
<dbReference type="PANTHER" id="PTHR21248:SF22">
    <property type="entry name" value="PHOSPHOLIPASE D"/>
    <property type="match status" value="1"/>
</dbReference>
<dbReference type="Pfam" id="PF13091">
    <property type="entry name" value="PLDc_2"/>
    <property type="match status" value="2"/>
</dbReference>
<dbReference type="Pfam" id="PF13396">
    <property type="entry name" value="PLDc_N"/>
    <property type="match status" value="1"/>
</dbReference>
<dbReference type="SMART" id="SM00155">
    <property type="entry name" value="PLDc"/>
    <property type="match status" value="2"/>
</dbReference>
<dbReference type="SUPFAM" id="SSF56024">
    <property type="entry name" value="Phospholipase D/nuclease"/>
    <property type="match status" value="2"/>
</dbReference>
<dbReference type="PROSITE" id="PS50035">
    <property type="entry name" value="PLD"/>
    <property type="match status" value="2"/>
</dbReference>
<protein>
    <recommendedName>
        <fullName evidence="1">Cardiolipin synthase A</fullName>
        <shortName evidence="1">CL synthase</shortName>
        <ecNumber evidence="1">2.7.8.-</ecNumber>
    </recommendedName>
</protein>
<sequence length="486" mass="56281">MDIFYNLIKCLIFSTYWLLIANITFRVLIKRRNIPYSMSWLLTIYIIPFIGISIWFFFGELYLGKRQKKIANRIWSISNKWLHELKSCTYIFQIKNSEVATSIFQLCKNRQGLHGIKSKKIKLLTNTKKIMQILIRDIYLARKNIEMVFYIWKPGGMADDVAIALIDSAKRGIHCRLMLDSAGSIEFFQSPWVEIMRKSGIQVVEALKVNLLRVFLRRVDVRQHRKIILIDNYIAYSGSMNLVDPYLFKKSSGIGQWIDLMTRIEGPIATTMGIIYSCDWEIETGLKILPQLPNKKMLENQSNKNASIQVIASGPGFLKNMIHQALLTAIYSAKRELIITTPYLVPSEDLLEAICTAAQRGVEVSIIIPLYHDSILVKWASRVFFSELLEAGVKIFQFQKGLLHSKSILVDQQLSLIGTVNLDMRSLWLNFEITLVIDDSDFGRNLFCIQNKYISDSQLIDKKAWSMRAYWKRILEKIFYFLSPLL</sequence>
<proteinExistence type="inferred from homology"/>
<feature type="chain" id="PRO_1000124264" description="Cardiolipin synthase A">
    <location>
        <begin position="1"/>
        <end position="486"/>
    </location>
</feature>
<feature type="transmembrane region" description="Helical" evidence="1">
    <location>
        <begin position="3"/>
        <end position="23"/>
    </location>
</feature>
<feature type="transmembrane region" description="Helical" evidence="1">
    <location>
        <begin position="38"/>
        <end position="58"/>
    </location>
</feature>
<feature type="domain" description="PLD phosphodiesterase 1" evidence="1">
    <location>
        <begin position="219"/>
        <end position="246"/>
    </location>
</feature>
<feature type="domain" description="PLD phosphodiesterase 2" evidence="1">
    <location>
        <begin position="399"/>
        <end position="426"/>
    </location>
</feature>
<feature type="active site" evidence="1">
    <location>
        <position position="224"/>
    </location>
</feature>
<feature type="active site" evidence="1">
    <location>
        <position position="226"/>
    </location>
</feature>
<feature type="active site" evidence="1">
    <location>
        <position position="231"/>
    </location>
</feature>
<feature type="active site" evidence="1">
    <location>
        <position position="404"/>
    </location>
</feature>
<feature type="active site" evidence="1">
    <location>
        <position position="406"/>
    </location>
</feature>
<feature type="active site" evidence="1">
    <location>
        <position position="411"/>
    </location>
</feature>
<accession>B8D966</accession>
<name>CLSA_BUCA5</name>